<accession>P35233</accession>
<keyword id="KW-0025">Alternative splicing</keyword>
<keyword id="KW-1003">Cell membrane</keyword>
<keyword id="KW-0963">Cytoplasm</keyword>
<keyword id="KW-0256">Endoplasmic reticulum</keyword>
<keyword id="KW-0378">Hydrolase</keyword>
<keyword id="KW-0472">Membrane</keyword>
<keyword id="KW-0539">Nucleus</keyword>
<keyword id="KW-0597">Phosphoprotein</keyword>
<keyword id="KW-0904">Protein phosphatase</keyword>
<keyword id="KW-1185">Reference proteome</keyword>
<keyword id="KW-0702">S-nitrosylation</keyword>
<dbReference type="EC" id="3.1.3.48"/>
<dbReference type="EMBL" id="X58828">
    <property type="protein sequence ID" value="CAA41633.1"/>
    <property type="molecule type" value="mRNA"/>
</dbReference>
<dbReference type="EMBL" id="BC078758">
    <property type="protein sequence ID" value="AAH78758.1"/>
    <property type="molecule type" value="mRNA"/>
</dbReference>
<dbReference type="PIR" id="S14294">
    <property type="entry name" value="S14294"/>
</dbReference>
<dbReference type="RefSeq" id="NP_446442.1">
    <molecule id="P35233-4"/>
    <property type="nucleotide sequence ID" value="NM_053990.3"/>
</dbReference>
<dbReference type="SMR" id="P35233"/>
<dbReference type="FunCoup" id="P35233">
    <property type="interactions" value="3522"/>
</dbReference>
<dbReference type="IntAct" id="P35233">
    <property type="interactions" value="1"/>
</dbReference>
<dbReference type="STRING" id="10116.ENSRNOP00000023763"/>
<dbReference type="BindingDB" id="P35233"/>
<dbReference type="PhosphoSitePlus" id="P35233"/>
<dbReference type="jPOST" id="P35233"/>
<dbReference type="PaxDb" id="10116-ENSRNOP00000063665"/>
<dbReference type="GeneID" id="117063"/>
<dbReference type="KEGG" id="rno:117063"/>
<dbReference type="UCSC" id="RGD:620710">
    <molecule id="P35233-1"/>
    <property type="organism name" value="rat"/>
</dbReference>
<dbReference type="AGR" id="RGD:620710"/>
<dbReference type="CTD" id="5771"/>
<dbReference type="RGD" id="620710">
    <property type="gene designation" value="Ptpn2"/>
</dbReference>
<dbReference type="VEuPathDB" id="HostDB:ENSRNOG00000017453"/>
<dbReference type="eggNOG" id="KOG0789">
    <property type="taxonomic scope" value="Eukaryota"/>
</dbReference>
<dbReference type="InParanoid" id="P35233"/>
<dbReference type="OrthoDB" id="9450131at2759"/>
<dbReference type="Reactome" id="R-RNO-6807004">
    <property type="pathway name" value="Negative regulation of MET activity"/>
</dbReference>
<dbReference type="Reactome" id="R-RNO-877312">
    <property type="pathway name" value="Regulation of IFNG signaling"/>
</dbReference>
<dbReference type="Reactome" id="R-RNO-9833482">
    <property type="pathway name" value="PKR-mediated signaling"/>
</dbReference>
<dbReference type="PRO" id="PR:P35233"/>
<dbReference type="Proteomes" id="UP000002494">
    <property type="component" value="Chromosome 18"/>
</dbReference>
<dbReference type="Bgee" id="ENSRNOG00000017453">
    <property type="expression patterns" value="Expressed in thymus and 20 other cell types or tissues"/>
</dbReference>
<dbReference type="GO" id="GO:0005737">
    <property type="term" value="C:cytoplasm"/>
    <property type="evidence" value="ECO:0000318"/>
    <property type="project" value="GO_Central"/>
</dbReference>
<dbReference type="GO" id="GO:0005783">
    <property type="term" value="C:endoplasmic reticulum"/>
    <property type="evidence" value="ECO:0000250"/>
    <property type="project" value="UniProtKB"/>
</dbReference>
<dbReference type="GO" id="GO:0005793">
    <property type="term" value="C:endoplasmic reticulum-Golgi intermediate compartment"/>
    <property type="evidence" value="ECO:0000250"/>
    <property type="project" value="UniProtKB"/>
</dbReference>
<dbReference type="GO" id="GO:0031904">
    <property type="term" value="C:endosome lumen"/>
    <property type="evidence" value="ECO:0000266"/>
    <property type="project" value="RGD"/>
</dbReference>
<dbReference type="GO" id="GO:0031965">
    <property type="term" value="C:nuclear membrane"/>
    <property type="evidence" value="ECO:0007669"/>
    <property type="project" value="UniProtKB-SubCell"/>
</dbReference>
<dbReference type="GO" id="GO:0005634">
    <property type="term" value="C:nucleus"/>
    <property type="evidence" value="ECO:0000250"/>
    <property type="project" value="UniProtKB"/>
</dbReference>
<dbReference type="GO" id="GO:0005886">
    <property type="term" value="C:plasma membrane"/>
    <property type="evidence" value="ECO:0000266"/>
    <property type="project" value="RGD"/>
</dbReference>
<dbReference type="GO" id="GO:0003677">
    <property type="term" value="F:DNA binding"/>
    <property type="evidence" value="ECO:0000304"/>
    <property type="project" value="RGD"/>
</dbReference>
<dbReference type="GO" id="GO:0005178">
    <property type="term" value="F:integrin binding"/>
    <property type="evidence" value="ECO:0000266"/>
    <property type="project" value="RGD"/>
</dbReference>
<dbReference type="GO" id="GO:0004726">
    <property type="term" value="F:non-membrane spanning protein tyrosine phosphatase activity"/>
    <property type="evidence" value="ECO:0000314"/>
    <property type="project" value="RGD"/>
</dbReference>
<dbReference type="GO" id="GO:0019901">
    <property type="term" value="F:protein kinase binding"/>
    <property type="evidence" value="ECO:0000266"/>
    <property type="project" value="RGD"/>
</dbReference>
<dbReference type="GO" id="GO:0004725">
    <property type="term" value="F:protein tyrosine phosphatase activity"/>
    <property type="evidence" value="ECO:0000250"/>
    <property type="project" value="UniProtKB"/>
</dbReference>
<dbReference type="GO" id="GO:0030971">
    <property type="term" value="F:receptor tyrosine kinase binding"/>
    <property type="evidence" value="ECO:0000266"/>
    <property type="project" value="RGD"/>
</dbReference>
<dbReference type="GO" id="GO:0097677">
    <property type="term" value="F:STAT family protein binding"/>
    <property type="evidence" value="ECO:0000266"/>
    <property type="project" value="RGD"/>
</dbReference>
<dbReference type="GO" id="GO:0019905">
    <property type="term" value="F:syntaxin binding"/>
    <property type="evidence" value="ECO:0000266"/>
    <property type="project" value="RGD"/>
</dbReference>
<dbReference type="GO" id="GO:0030183">
    <property type="term" value="P:B cell differentiation"/>
    <property type="evidence" value="ECO:0000250"/>
    <property type="project" value="UniProtKB"/>
</dbReference>
<dbReference type="GO" id="GO:0030218">
    <property type="term" value="P:erythrocyte differentiation"/>
    <property type="evidence" value="ECO:0000250"/>
    <property type="project" value="UniProtKB"/>
</dbReference>
<dbReference type="GO" id="GO:0042593">
    <property type="term" value="P:glucose homeostasis"/>
    <property type="evidence" value="ECO:0000250"/>
    <property type="project" value="UniProtKB"/>
</dbReference>
<dbReference type="GO" id="GO:0038020">
    <property type="term" value="P:insulin receptor recycling"/>
    <property type="evidence" value="ECO:0000266"/>
    <property type="project" value="RGD"/>
</dbReference>
<dbReference type="GO" id="GO:0008286">
    <property type="term" value="P:insulin receptor signaling pathway"/>
    <property type="evidence" value="ECO:0000250"/>
    <property type="project" value="UniProtKB"/>
</dbReference>
<dbReference type="GO" id="GO:0008285">
    <property type="term" value="P:negative regulation of cell population proliferation"/>
    <property type="evidence" value="ECO:0000250"/>
    <property type="project" value="UniProtKB"/>
</dbReference>
<dbReference type="GO" id="GO:0050922">
    <property type="term" value="P:negative regulation of chemotaxis"/>
    <property type="evidence" value="ECO:0000250"/>
    <property type="project" value="UniProtKB"/>
</dbReference>
<dbReference type="GO" id="GO:0042059">
    <property type="term" value="P:negative regulation of epidermal growth factor receptor signaling pathway"/>
    <property type="evidence" value="ECO:0000250"/>
    <property type="project" value="UniProtKB"/>
</dbReference>
<dbReference type="GO" id="GO:0070373">
    <property type="term" value="P:negative regulation of ERK1 and ERK2 cascade"/>
    <property type="evidence" value="ECO:0000250"/>
    <property type="project" value="UniProtKB"/>
</dbReference>
<dbReference type="GO" id="GO:0050728">
    <property type="term" value="P:negative regulation of inflammatory response"/>
    <property type="evidence" value="ECO:0000250"/>
    <property type="project" value="UniProtKB"/>
</dbReference>
<dbReference type="GO" id="GO:0046627">
    <property type="term" value="P:negative regulation of insulin receptor signaling pathway"/>
    <property type="evidence" value="ECO:0000250"/>
    <property type="project" value="UniProtKB"/>
</dbReference>
<dbReference type="GO" id="GO:1902206">
    <property type="term" value="P:negative regulation of interleukin-2-mediated signaling pathway"/>
    <property type="evidence" value="ECO:0000250"/>
    <property type="project" value="UniProtKB"/>
</dbReference>
<dbReference type="GO" id="GO:1902215">
    <property type="term" value="P:negative regulation of interleukin-4-mediated signaling pathway"/>
    <property type="evidence" value="ECO:0000250"/>
    <property type="project" value="UniProtKB"/>
</dbReference>
<dbReference type="GO" id="GO:0070104">
    <property type="term" value="P:negative regulation of interleukin-6-mediated signaling pathway"/>
    <property type="evidence" value="ECO:0000250"/>
    <property type="project" value="UniProtKB"/>
</dbReference>
<dbReference type="GO" id="GO:0010888">
    <property type="term" value="P:negative regulation of lipid storage"/>
    <property type="evidence" value="ECO:0000250"/>
    <property type="project" value="UniProtKB"/>
</dbReference>
<dbReference type="GO" id="GO:1902227">
    <property type="term" value="P:negative regulation of macrophage colony-stimulating factor signaling pathway"/>
    <property type="evidence" value="ECO:0000250"/>
    <property type="project" value="UniProtKB"/>
</dbReference>
<dbReference type="GO" id="GO:0045650">
    <property type="term" value="P:negative regulation of macrophage differentiation"/>
    <property type="evidence" value="ECO:0000250"/>
    <property type="project" value="UniProtKB"/>
</dbReference>
<dbReference type="GO" id="GO:2000587">
    <property type="term" value="P:negative regulation of platelet-derived growth factor receptor-beta signaling pathway"/>
    <property type="evidence" value="ECO:0000250"/>
    <property type="project" value="UniProtKB"/>
</dbReference>
<dbReference type="GO" id="GO:1902233">
    <property type="term" value="P:negative regulation of positive thymic T cell selection"/>
    <property type="evidence" value="ECO:0000250"/>
    <property type="project" value="UniProtKB"/>
</dbReference>
<dbReference type="GO" id="GO:0046426">
    <property type="term" value="P:negative regulation of receptor signaling pathway via JAK-STAT"/>
    <property type="evidence" value="ECO:0000318"/>
    <property type="project" value="GO_Central"/>
</dbReference>
<dbReference type="GO" id="GO:0050860">
    <property type="term" value="P:negative regulation of T cell receptor signaling pathway"/>
    <property type="evidence" value="ECO:0000250"/>
    <property type="project" value="UniProtKB"/>
</dbReference>
<dbReference type="GO" id="GO:0000122">
    <property type="term" value="P:negative regulation of transcription by RNA polymerase II"/>
    <property type="evidence" value="ECO:0000266"/>
    <property type="project" value="RGD"/>
</dbReference>
<dbReference type="GO" id="GO:0010804">
    <property type="term" value="P:negative regulation of tumor necrosis factor-mediated signaling pathway"/>
    <property type="evidence" value="ECO:0000250"/>
    <property type="project" value="UniProtKB"/>
</dbReference>
<dbReference type="GO" id="GO:0060339">
    <property type="term" value="P:negative regulation of type I interferon-mediated signaling pathway"/>
    <property type="evidence" value="ECO:0000250"/>
    <property type="project" value="UniProtKB"/>
</dbReference>
<dbReference type="GO" id="GO:0060336">
    <property type="term" value="P:negative regulation of type II interferon-mediated signaling pathway"/>
    <property type="evidence" value="ECO:0000250"/>
    <property type="project" value="UniProtKB"/>
</dbReference>
<dbReference type="GO" id="GO:0042532">
    <property type="term" value="P:negative regulation of tyrosine phosphorylation of STAT protein"/>
    <property type="evidence" value="ECO:0000250"/>
    <property type="project" value="UniProtKB"/>
</dbReference>
<dbReference type="GO" id="GO:0035335">
    <property type="term" value="P:peptidyl-tyrosine dephosphorylation"/>
    <property type="evidence" value="ECO:0000250"/>
    <property type="project" value="UniProtKB"/>
</dbReference>
<dbReference type="GO" id="GO:1902237">
    <property type="term" value="P:positive regulation of endoplasmic reticulum stress-induced intrinsic apoptotic signaling pathway"/>
    <property type="evidence" value="ECO:0000266"/>
    <property type="project" value="RGD"/>
</dbReference>
<dbReference type="GO" id="GO:0045722">
    <property type="term" value="P:positive regulation of gluconeogenesis"/>
    <property type="evidence" value="ECO:0000250"/>
    <property type="project" value="UniProtKB"/>
</dbReference>
<dbReference type="GO" id="GO:1903899">
    <property type="term" value="P:positive regulation of PERK-mediated unfolded protein response"/>
    <property type="evidence" value="ECO:0000266"/>
    <property type="project" value="RGD"/>
</dbReference>
<dbReference type="GO" id="GO:1902202">
    <property type="term" value="P:regulation of hepatocyte growth factor receptor signaling pathway"/>
    <property type="evidence" value="ECO:0000250"/>
    <property type="project" value="UniProtKB"/>
</dbReference>
<dbReference type="GO" id="GO:0030217">
    <property type="term" value="P:T cell differentiation"/>
    <property type="evidence" value="ECO:0000250"/>
    <property type="project" value="UniProtKB"/>
</dbReference>
<dbReference type="FunFam" id="3.90.190.10:FF:000025">
    <property type="entry name" value="Tyrosine-protein phosphatase non-receptor type 1"/>
    <property type="match status" value="1"/>
</dbReference>
<dbReference type="Gene3D" id="3.90.190.10">
    <property type="entry name" value="Protein tyrosine phosphatase superfamily"/>
    <property type="match status" value="1"/>
</dbReference>
<dbReference type="InterPro" id="IPR051985">
    <property type="entry name" value="NR_tyrosine_phosphatase"/>
</dbReference>
<dbReference type="InterPro" id="IPR029021">
    <property type="entry name" value="Prot-tyrosine_phosphatase-like"/>
</dbReference>
<dbReference type="InterPro" id="IPR000242">
    <property type="entry name" value="PTP_cat"/>
</dbReference>
<dbReference type="InterPro" id="IPR012265">
    <property type="entry name" value="Ptpn1/Ptpn2"/>
</dbReference>
<dbReference type="InterPro" id="IPR016130">
    <property type="entry name" value="Tyr_Pase_AS"/>
</dbReference>
<dbReference type="InterPro" id="IPR003595">
    <property type="entry name" value="Tyr_Pase_cat"/>
</dbReference>
<dbReference type="InterPro" id="IPR000387">
    <property type="entry name" value="Tyr_Pase_dom"/>
</dbReference>
<dbReference type="PANTHER" id="PTHR46047:SF1">
    <property type="entry name" value="TYROSINE-PROTEIN PHOSPHATASE NON-RECEPTOR TYPE 2"/>
    <property type="match status" value="1"/>
</dbReference>
<dbReference type="PANTHER" id="PTHR46047">
    <property type="entry name" value="TYROSINE-PROTEIN PHOSPHATASE NON-RECEPTOR TYPE 61F"/>
    <property type="match status" value="1"/>
</dbReference>
<dbReference type="Pfam" id="PF00102">
    <property type="entry name" value="Y_phosphatase"/>
    <property type="match status" value="1"/>
</dbReference>
<dbReference type="PIRSF" id="PIRSF000926">
    <property type="entry name" value="Tyr-Ptase_nr1"/>
    <property type="match status" value="1"/>
</dbReference>
<dbReference type="PRINTS" id="PR00700">
    <property type="entry name" value="PRTYPHPHTASE"/>
</dbReference>
<dbReference type="SMART" id="SM00194">
    <property type="entry name" value="PTPc"/>
    <property type="match status" value="1"/>
</dbReference>
<dbReference type="SMART" id="SM00404">
    <property type="entry name" value="PTPc_motif"/>
    <property type="match status" value="1"/>
</dbReference>
<dbReference type="SUPFAM" id="SSF52799">
    <property type="entry name" value="(Phosphotyrosine protein) phosphatases II"/>
    <property type="match status" value="1"/>
</dbReference>
<dbReference type="PROSITE" id="PS00383">
    <property type="entry name" value="TYR_PHOSPHATASE_1"/>
    <property type="match status" value="1"/>
</dbReference>
<dbReference type="PROSITE" id="PS50056">
    <property type="entry name" value="TYR_PHOSPHATASE_2"/>
    <property type="match status" value="1"/>
</dbReference>
<dbReference type="PROSITE" id="PS50055">
    <property type="entry name" value="TYR_PHOSPHATASE_PTP"/>
    <property type="match status" value="1"/>
</dbReference>
<reference key="1">
    <citation type="journal article" date="1991" name="FEBS Lett.">
        <title>Molecular cloning and expression of a protein-tyrosine phosphatase showing homology with transcription factors Fos and Jun.</title>
        <authorList>
            <person name="Swarup G."/>
            <person name="Kamatkar S."/>
            <person name="Radha V."/>
            <person name="Rema V."/>
        </authorList>
    </citation>
    <scope>NUCLEOTIDE SEQUENCE [MRNA] (ISOFORM 4)</scope>
    <source>
        <tissue>Spleen</tissue>
    </source>
</reference>
<reference key="2">
    <citation type="journal article" date="2004" name="Genome Res.">
        <title>The status, quality, and expansion of the NIH full-length cDNA project: the Mammalian Gene Collection (MGC).</title>
        <authorList>
            <consortium name="The MGC Project Team"/>
        </authorList>
    </citation>
    <scope>NUCLEOTIDE SEQUENCE [LARGE SCALE MRNA] (ISOFORM 4)</scope>
    <source>
        <tissue>Testis</tissue>
    </source>
</reference>
<reference key="3">
    <citation type="journal article" date="1993" name="Biochemistry">
        <title>Binding of a protein-tyrosine phosphatase to DNA through its carboxy-terminal noncatalytic domain.</title>
        <authorList>
            <person name="Radha V."/>
            <person name="Kamatkar S."/>
            <person name="Swarup G."/>
        </authorList>
    </citation>
    <scope>DNA-BINDING</scope>
</reference>
<reference key="4">
    <citation type="journal article" date="1995" name="DNA Cell Biol.">
        <title>Alternative splicing generates four different forms of a non-transmembrane protein tyrosine phosphatase mRNA.</title>
        <authorList>
            <person name="Reddy R.S."/>
            <person name="Swarup G."/>
        </authorList>
    </citation>
    <scope>ALTERNATIVE SPLICING</scope>
</reference>
<reference key="5">
    <citation type="journal article" date="1996" name="J. Biol. Chem.">
        <title>Two splice variants of a tyrosine phosphatase differ in substrate specificity, DNA binding, and subcellular location.</title>
        <authorList>
            <person name="Kamatkar S."/>
            <person name="Radha V."/>
            <person name="Nambirajan S."/>
            <person name="Reddy R.S."/>
            <person name="Swarup G."/>
        </authorList>
    </citation>
    <scope>SUBCELLULAR LOCATION (ISOFORMS 1 AND 2)</scope>
</reference>
<evidence type="ECO:0000250" key="1"/>
<evidence type="ECO:0000250" key="2">
    <source>
        <dbReference type="UniProtKB" id="P17706"/>
    </source>
</evidence>
<evidence type="ECO:0000250" key="3">
    <source>
        <dbReference type="UniProtKB" id="P18031"/>
    </source>
</evidence>
<evidence type="ECO:0000250" key="4">
    <source>
        <dbReference type="UniProtKB" id="Q06180"/>
    </source>
</evidence>
<evidence type="ECO:0000255" key="5">
    <source>
        <dbReference type="PROSITE-ProRule" id="PRU00160"/>
    </source>
</evidence>
<evidence type="ECO:0000255" key="6">
    <source>
        <dbReference type="PROSITE-ProRule" id="PRU10044"/>
    </source>
</evidence>
<evidence type="ECO:0000269" key="7">
    <source>
    </source>
</evidence>
<evidence type="ECO:0000303" key="8">
    <source>
    </source>
</evidence>
<evidence type="ECO:0000303" key="9">
    <source>
    </source>
</evidence>
<evidence type="ECO:0000305" key="10"/>
<protein>
    <recommendedName>
        <fullName>Tyrosine-protein phosphatase non-receptor type 2</fullName>
        <ecNumber>3.1.3.48</ecNumber>
    </recommendedName>
    <alternativeName>
        <fullName>Protein-tyrosine phosphatase PTP-S</fullName>
    </alternativeName>
</protein>
<comment type="function">
    <text evidence="2">Non-receptor type tyrosine-specific phosphatase that dephosphorylates receptor protein tyrosine kinases including INSR, EGFR, CSF1R, PDGFR. Also dephosphorylates non-receptor protein tyrosine kinases like JAK1, JAK2, JAK3, Src family kinases, STAT1, STAT3 and STAT6 either in the nucleus or the cytoplasm. Negatively regulates numerous signaling pathways and biological processes like hematopoiesis, inflammatory response, cell proliferation and differentiation, and glucose homeostasis. Plays a multifaceted and important role in the development of the immune system. Functions in T-cell receptor signaling through dephosphorylation of FYN and LCK to control T-cells differentiation and activation. Dephosphorylates CSF1R, negatively regulating its downstream signaling and macrophage differentiation. Negatively regulates cytokine (IL2/interleukin-2 and interferon)-mediated signaling through dephosphorylation of the cytoplasmic kinases JAK1, JAK3 and their substrate STAT1, that propagate signaling downstream of the cytokine receptors. Also regulates the IL6/interleukin-6 and IL4/interleukin-4 cytokine signaling through dephosphorylation of STAT3 and STAT6 respectively. In addition to the immune system, it is involved in anchorage-dependent, negative regulation of EGF-stimulated cell growth. Activated by the integrin ITGA1/ITGB1, it dephosphorylates EGFR and negatively regulates EGF signaling. Dephosphorylates PDGFRB and negatively regulates platelet-derived growth factor receptor-beta signaling pathway and therefore cell proliferation. Negatively regulates tumor necrosis factor-mediated signaling downstream via MAPK through SRC dephosphorylation. May also regulate the hepatocyte growth factor receptor signaling pathway through dephosphorylation of the hepatocyte growth factor receptor MET. Also plays an important role in glucose homeostasis. For instance, negatively regulates the insulin receptor signaling pathway through the dephosphorylation of INSR and control gluconeogenesis and liver glucose production through negative regulation of the IL6 signaling pathways. May also bind DNA (By similarity).</text>
</comment>
<comment type="catalytic activity">
    <reaction evidence="6">
        <text>O-phospho-L-tyrosyl-[protein] + H2O = L-tyrosyl-[protein] + phosphate</text>
        <dbReference type="Rhea" id="RHEA:10684"/>
        <dbReference type="Rhea" id="RHEA-COMP:10136"/>
        <dbReference type="Rhea" id="RHEA-COMP:20101"/>
        <dbReference type="ChEBI" id="CHEBI:15377"/>
        <dbReference type="ChEBI" id="CHEBI:43474"/>
        <dbReference type="ChEBI" id="CHEBI:46858"/>
        <dbReference type="ChEBI" id="CHEBI:61978"/>
        <dbReference type="EC" id="3.1.3.48"/>
    </reaction>
</comment>
<comment type="subunit">
    <text evidence="2 4">Interacts with RMDN3. Interacts with TMED9. Interacts with STX17; dephosphorylates STX17. Interacts with ITGA1 (via cytoplasmic domain); activates the phosphatase activity towards EGFR. Interacts with TRAF2; probably involved in tumor necrosis factor-mediated signaling. Interacts with MET (By similarity). Interacts with FAM220A and STAT3; interaction with FAM220A promotes interaction of PTPN2 with transcriptional activator STAT3, leading to dephosphorylation of STAT3 by PTPN2 and negative regulation of STAT3 transcriptional activator activity (By similarity).</text>
</comment>
<comment type="subcellular location">
    <subcellularLocation>
        <location>Cytoplasm</location>
    </subcellularLocation>
    <subcellularLocation>
        <location evidence="1">Endoplasmic reticulum-Golgi intermediate compartment</location>
    </subcellularLocation>
    <text evidence="1">Targeted to the endoplasmic reticulum by its C-terminal hydrophobic region.</text>
</comment>
<comment type="subcellular location">
    <molecule>Isoform 1</molecule>
    <subcellularLocation>
        <location evidence="7">Endoplasmic reticulum</location>
    </subcellularLocation>
    <subcellularLocation>
        <location evidence="7">Nucleus membrane</location>
    </subcellularLocation>
</comment>
<comment type="subcellular location">
    <molecule>Isoform 2</molecule>
    <subcellularLocation>
        <location evidence="1">Nucleus</location>
    </subcellularLocation>
    <subcellularLocation>
        <location evidence="1">Cytoplasm</location>
    </subcellularLocation>
    <subcellularLocation>
        <location evidence="1">Cell membrane</location>
    </subcellularLocation>
    <text evidence="1">Predominantly localizes to chromatin. Able to shuttle between the nucleus and the cytoplasm and to dephosphorylate plasma membrane receptors. Recruited by activated ITGA1 at the plasma membrane (By similarity).</text>
</comment>
<comment type="alternative products">
    <event type="alternative splicing"/>
    <isoform>
        <id>P35233-1</id>
        <name>1</name>
        <name>PTP-S4</name>
        <sequence type="displayed"/>
    </isoform>
    <isoform>
        <id>P35233-2</id>
        <name>2</name>
        <name>PTP-S2</name>
        <sequence type="described" ref="VSP_042002"/>
    </isoform>
    <isoform>
        <id>P35233-3</id>
        <name>3</name>
        <name>PTP-S3</name>
        <sequence type="described" ref="VSP_042001"/>
    </isoform>
    <isoform>
        <id>P35233-4</id>
        <name>4</name>
        <name>PTP-S1</name>
        <sequence type="described" ref="VSP_042001 VSP_042002"/>
    </isoform>
</comment>
<comment type="tissue specificity">
    <text>Does not show tissue- or cell-type specificity although levels of transcription show variability. Macrophages showed higher levels of expression than lymphocytes.</text>
</comment>
<comment type="PTM">
    <molecule>Isoform 2</molecule>
    <text evidence="2">Specifically phosphorylated in a cell cycle-dependent manner by cyclin-dependent kinases CDK1 and CDK2. Probably activated through phosphorylation by PKR.</text>
</comment>
<comment type="miscellaneous">
    <molecule>Isoform 3</molecule>
    <text evidence="10">Minor.</text>
</comment>
<comment type="miscellaneous">
    <molecule>Isoform 4</molecule>
    <text evidence="10">Minor.</text>
</comment>
<comment type="similarity">
    <text evidence="10">Belongs to the protein-tyrosine phosphatase family. Non-receptor class 1 subfamily.</text>
</comment>
<feature type="chain" id="PRO_0000094754" description="Tyrosine-protein phosphatase non-receptor type 2">
    <location>
        <begin position="1"/>
        <end position="416"/>
    </location>
</feature>
<feature type="domain" description="Tyrosine-protein phosphatase" evidence="5">
    <location>
        <begin position="5"/>
        <end position="275"/>
    </location>
</feature>
<feature type="region of interest" description="Endoplasmic reticulum location" evidence="1">
    <location>
        <begin position="341"/>
        <end position="410"/>
    </location>
</feature>
<feature type="region of interest" description="May mediate interaction with STX17" evidence="1">
    <location>
        <begin position="371"/>
        <end position="410"/>
    </location>
</feature>
<feature type="active site" description="Phosphocysteine intermediate" evidence="5 6">
    <location>
        <position position="216"/>
    </location>
</feature>
<feature type="binding site" evidence="1">
    <location>
        <position position="182"/>
    </location>
    <ligand>
        <name>substrate</name>
    </ligand>
</feature>
<feature type="binding site" evidence="1">
    <location>
        <begin position="216"/>
        <end position="222"/>
    </location>
    <ligand>
        <name>substrate</name>
    </ligand>
</feature>
<feature type="binding site" evidence="1">
    <location>
        <position position="260"/>
    </location>
    <ligand>
        <name>substrate</name>
    </ligand>
</feature>
<feature type="modified residue" description="Phosphotyrosine" evidence="3">
    <location>
        <position position="22"/>
    </location>
</feature>
<feature type="modified residue" description="Phosphoserine" evidence="3">
    <location>
        <position position="52"/>
    </location>
</feature>
<feature type="modified residue" description="Phosphotyrosine" evidence="3">
    <location>
        <position position="68"/>
    </location>
</feature>
<feature type="modified residue" description="S-nitrosocysteine" evidence="3">
    <location>
        <position position="216"/>
    </location>
</feature>
<feature type="modified residue" description="Phosphoserine" evidence="2">
    <location>
        <position position="293"/>
    </location>
</feature>
<feature type="modified residue" description="Phosphoserine" evidence="2">
    <location>
        <position position="298"/>
    </location>
</feature>
<feature type="modified residue" description="Phosphoserine" evidence="2">
    <location>
        <position position="304"/>
    </location>
</feature>
<feature type="modified residue" description="Phosphoserine" evidence="4">
    <location>
        <position position="320"/>
    </location>
</feature>
<feature type="modified residue" description="Phosphoserine" evidence="3">
    <location>
        <position position="339"/>
    </location>
</feature>
<feature type="splice variant" id="VSP_042001" description="In isoform 3 and isoform 4." evidence="8 9">
    <location>
        <begin position="287"/>
        <end position="305"/>
    </location>
</feature>
<feature type="splice variant" id="VSP_042002" description="In isoform 2 and isoform 4." evidence="8 9">
    <location>
        <begin position="377"/>
        <end position="410"/>
    </location>
</feature>
<feature type="modified residue" description="Phosphoserine" evidence="2">
    <location sequence="P35233-2">
        <position position="304"/>
    </location>
</feature>
<gene>
    <name type="primary">Ptpn2</name>
</gene>
<proteinExistence type="evidence at protein level"/>
<organism>
    <name type="scientific">Rattus norvegicus</name>
    <name type="common">Rat</name>
    <dbReference type="NCBI Taxonomy" id="10116"/>
    <lineage>
        <taxon>Eukaryota</taxon>
        <taxon>Metazoa</taxon>
        <taxon>Chordata</taxon>
        <taxon>Craniata</taxon>
        <taxon>Vertebrata</taxon>
        <taxon>Euteleostomi</taxon>
        <taxon>Mammalia</taxon>
        <taxon>Eutheria</taxon>
        <taxon>Euarchontoglires</taxon>
        <taxon>Glires</taxon>
        <taxon>Rodentia</taxon>
        <taxon>Myomorpha</taxon>
        <taxon>Muroidea</taxon>
        <taxon>Muridae</taxon>
        <taxon>Murinae</taxon>
        <taxon>Rattus</taxon>
    </lineage>
</organism>
<sequence>MSATIEREFEELDAQCRWQPLYLEIRNESHDYPHRVAKFPENRNRNRYRDVSPYDHSRVKLQSAENDYINASLVDIEEAQRSYILTQGPLPNTCCHFWLMVWQQKTRAVVMLNRTVEKESVKCAQYWPTDDREMVFKETGFSVKLLSEDVKSYYTVHLLQLENINSGETRTISHFHYTTWPDFGVPESPASFLNFLFKVRESGSLNPDHGPAVIHCSAGIGRSGTFSLVDTCLVLMEKGEDVNVKQILLSMRKYRMGLIQTPDQLRFSYMAIIEGAKYTKGDSNIQKRWKELSKEDLSPVCRHSQNRTMTEKYNGKRIGSEDEKLTGLSSKVPDTVEESSESILRKRIREDRKATTAQKVQQMRQRLNETERKRKRWLYWQPILTKMGFVSVILVGALVGWTLLFQLNVLPRLTDT</sequence>
<name>PTN2_RAT</name>